<feature type="chain" id="PRO_0000329778" description="Polyribonucleotide nucleotidyltransferase">
    <location>
        <begin position="1"/>
        <end position="701"/>
    </location>
</feature>
<feature type="domain" description="KH" evidence="1">
    <location>
        <begin position="554"/>
        <end position="613"/>
    </location>
</feature>
<feature type="domain" description="S1 motif" evidence="1">
    <location>
        <begin position="623"/>
        <end position="691"/>
    </location>
</feature>
<feature type="binding site" evidence="1">
    <location>
        <position position="487"/>
    </location>
    <ligand>
        <name>Mg(2+)</name>
        <dbReference type="ChEBI" id="CHEBI:18420"/>
    </ligand>
</feature>
<feature type="binding site" evidence="1">
    <location>
        <position position="493"/>
    </location>
    <ligand>
        <name>Mg(2+)</name>
        <dbReference type="ChEBI" id="CHEBI:18420"/>
    </ligand>
</feature>
<name>PNP_PSEP7</name>
<protein>
    <recommendedName>
        <fullName evidence="1">Polyribonucleotide nucleotidyltransferase</fullName>
        <ecNumber evidence="1">2.7.7.8</ecNumber>
    </recommendedName>
    <alternativeName>
        <fullName evidence="1">Polynucleotide phosphorylase</fullName>
        <shortName evidence="1">PNPase</shortName>
    </alternativeName>
</protein>
<gene>
    <name evidence="1" type="primary">pnp</name>
    <name type="ordered locus">PSPA7_5457</name>
</gene>
<sequence length="701" mass="75510">MNPVTKQFQFGQSTVTLETGRIARQATGAVLVTMDDVSVLVTVVGAKSPAEGRDFFPLSVHYQEKTYAAGRIPGGFFKREGRPSEKETLTSRLIDRPIRPLFPEGFMNEVQVVCTVVSTNKKSDPDIAAMIGTSAALAISGIPFAGPIGAARVGFHPEIGYILNPTYEQLQSSSLDMVVAGTEDAVLMVESEADELTEDQMLGAVLFAHDEFQAVIRAVKELAAEAGKPAWDWKAPAENTVLVNAIKAELGEAISQAYTITIKQDRYNRLGELRDQAVALFAGEEEGKFPASEVKDVFGLLEYRTVRENIVNGKPRIDGRDTRTVRPLRIEVGVLGKTHGSALFTRGETQALVVATLGTARDAQLLDTLEGERKDAFMLHYNFPPFSVGECGRMGSPGRREIGHGRLARRGVAAMLPTQDEFPYTIRVVSEITESNGSSSMASVCGASLALMDAGVPVKAPVAGIAMGLVKEGEKFAVLTDILGDEDHLGDMDFKVAGTDKGVTALQMDIKINGITEEIMEIALGQALEARLNILGQMNQVIARPRAELSENAPTMLQMKIDSDKIRDVIGKGGATIRAICEETKASIDIEDDGSVKIYGETKEAAEAAKQRVLAITAEAEIGKIYVGKVERIVDFGAFVNILPGKDGLVHISQISDKRIDKVTDVLQEGQEVKVLVLDVDNRGRIKLSIKDVAAAEASGV</sequence>
<comment type="function">
    <text evidence="1">Involved in mRNA degradation. Catalyzes the phosphorolysis of single-stranded polyribonucleotides processively in the 3'- to 5'-direction.</text>
</comment>
<comment type="catalytic activity">
    <reaction evidence="1">
        <text>RNA(n+1) + phosphate = RNA(n) + a ribonucleoside 5'-diphosphate</text>
        <dbReference type="Rhea" id="RHEA:22096"/>
        <dbReference type="Rhea" id="RHEA-COMP:14527"/>
        <dbReference type="Rhea" id="RHEA-COMP:17342"/>
        <dbReference type="ChEBI" id="CHEBI:43474"/>
        <dbReference type="ChEBI" id="CHEBI:57930"/>
        <dbReference type="ChEBI" id="CHEBI:140395"/>
        <dbReference type="EC" id="2.7.7.8"/>
    </reaction>
</comment>
<comment type="cofactor">
    <cofactor evidence="1">
        <name>Mg(2+)</name>
        <dbReference type="ChEBI" id="CHEBI:18420"/>
    </cofactor>
</comment>
<comment type="subunit">
    <text evidence="1">Component of the RNA degradosome, which is a multiprotein complex involved in RNA processing and mRNA degradation.</text>
</comment>
<comment type="subcellular location">
    <subcellularLocation>
        <location evidence="1">Cytoplasm</location>
    </subcellularLocation>
</comment>
<comment type="similarity">
    <text evidence="1">Belongs to the polyribonucleotide nucleotidyltransferase family.</text>
</comment>
<reference key="1">
    <citation type="submission" date="2007-06" db="EMBL/GenBank/DDBJ databases">
        <authorList>
            <person name="Dodson R.J."/>
            <person name="Harkins D."/>
            <person name="Paulsen I.T."/>
        </authorList>
    </citation>
    <scope>NUCLEOTIDE SEQUENCE [LARGE SCALE GENOMIC DNA]</scope>
    <source>
        <strain>DSM 24068 / PA7</strain>
    </source>
</reference>
<accession>A6VCJ6</accession>
<proteinExistence type="inferred from homology"/>
<organism>
    <name type="scientific">Pseudomonas paraeruginosa (strain DSM 24068 / PA7)</name>
    <name type="common">Pseudomonas aeruginosa (strain PA7)</name>
    <dbReference type="NCBI Taxonomy" id="381754"/>
    <lineage>
        <taxon>Bacteria</taxon>
        <taxon>Pseudomonadati</taxon>
        <taxon>Pseudomonadota</taxon>
        <taxon>Gammaproteobacteria</taxon>
        <taxon>Pseudomonadales</taxon>
        <taxon>Pseudomonadaceae</taxon>
        <taxon>Pseudomonas</taxon>
        <taxon>Pseudomonas paraeruginosa</taxon>
    </lineage>
</organism>
<evidence type="ECO:0000255" key="1">
    <source>
        <dbReference type="HAMAP-Rule" id="MF_01595"/>
    </source>
</evidence>
<keyword id="KW-0963">Cytoplasm</keyword>
<keyword id="KW-0460">Magnesium</keyword>
<keyword id="KW-0479">Metal-binding</keyword>
<keyword id="KW-0548">Nucleotidyltransferase</keyword>
<keyword id="KW-0694">RNA-binding</keyword>
<keyword id="KW-0808">Transferase</keyword>
<dbReference type="EC" id="2.7.7.8" evidence="1"/>
<dbReference type="EMBL" id="CP000744">
    <property type="protein sequence ID" value="ABR85627.1"/>
    <property type="molecule type" value="Genomic_DNA"/>
</dbReference>
<dbReference type="RefSeq" id="WP_003148740.1">
    <property type="nucleotide sequence ID" value="NC_009656.1"/>
</dbReference>
<dbReference type="SMR" id="A6VCJ6"/>
<dbReference type="GeneID" id="77223275"/>
<dbReference type="KEGG" id="pap:PSPA7_5457"/>
<dbReference type="HOGENOM" id="CLU_004217_2_2_6"/>
<dbReference type="Proteomes" id="UP000001582">
    <property type="component" value="Chromosome"/>
</dbReference>
<dbReference type="GO" id="GO:0005829">
    <property type="term" value="C:cytosol"/>
    <property type="evidence" value="ECO:0007669"/>
    <property type="project" value="TreeGrafter"/>
</dbReference>
<dbReference type="GO" id="GO:0000175">
    <property type="term" value="F:3'-5'-RNA exonuclease activity"/>
    <property type="evidence" value="ECO:0007669"/>
    <property type="project" value="TreeGrafter"/>
</dbReference>
<dbReference type="GO" id="GO:0000287">
    <property type="term" value="F:magnesium ion binding"/>
    <property type="evidence" value="ECO:0007669"/>
    <property type="project" value="UniProtKB-UniRule"/>
</dbReference>
<dbReference type="GO" id="GO:0004654">
    <property type="term" value="F:polyribonucleotide nucleotidyltransferase activity"/>
    <property type="evidence" value="ECO:0007669"/>
    <property type="project" value="UniProtKB-UniRule"/>
</dbReference>
<dbReference type="GO" id="GO:0003723">
    <property type="term" value="F:RNA binding"/>
    <property type="evidence" value="ECO:0007669"/>
    <property type="project" value="UniProtKB-UniRule"/>
</dbReference>
<dbReference type="GO" id="GO:0006402">
    <property type="term" value="P:mRNA catabolic process"/>
    <property type="evidence" value="ECO:0007669"/>
    <property type="project" value="UniProtKB-UniRule"/>
</dbReference>
<dbReference type="GO" id="GO:0006396">
    <property type="term" value="P:RNA processing"/>
    <property type="evidence" value="ECO:0007669"/>
    <property type="project" value="InterPro"/>
</dbReference>
<dbReference type="CDD" id="cd02393">
    <property type="entry name" value="KH-I_PNPase"/>
    <property type="match status" value="1"/>
</dbReference>
<dbReference type="CDD" id="cd11363">
    <property type="entry name" value="RNase_PH_PNPase_1"/>
    <property type="match status" value="1"/>
</dbReference>
<dbReference type="CDD" id="cd11364">
    <property type="entry name" value="RNase_PH_PNPase_2"/>
    <property type="match status" value="1"/>
</dbReference>
<dbReference type="CDD" id="cd04472">
    <property type="entry name" value="S1_PNPase"/>
    <property type="match status" value="1"/>
</dbReference>
<dbReference type="FunFam" id="2.40.50.140:FF:000023">
    <property type="entry name" value="Polyribonucleotide nucleotidyltransferase"/>
    <property type="match status" value="1"/>
</dbReference>
<dbReference type="FunFam" id="3.30.1370.10:FF:000001">
    <property type="entry name" value="Polyribonucleotide nucleotidyltransferase"/>
    <property type="match status" value="1"/>
</dbReference>
<dbReference type="FunFam" id="3.30.230.70:FF:000001">
    <property type="entry name" value="Polyribonucleotide nucleotidyltransferase"/>
    <property type="match status" value="1"/>
</dbReference>
<dbReference type="FunFam" id="3.30.230.70:FF:000002">
    <property type="entry name" value="Polyribonucleotide nucleotidyltransferase"/>
    <property type="match status" value="1"/>
</dbReference>
<dbReference type="Gene3D" id="3.30.230.70">
    <property type="entry name" value="GHMP Kinase, N-terminal domain"/>
    <property type="match status" value="2"/>
</dbReference>
<dbReference type="Gene3D" id="3.30.1370.10">
    <property type="entry name" value="K Homology domain, type 1"/>
    <property type="match status" value="1"/>
</dbReference>
<dbReference type="Gene3D" id="2.40.50.140">
    <property type="entry name" value="Nucleic acid-binding proteins"/>
    <property type="match status" value="1"/>
</dbReference>
<dbReference type="HAMAP" id="MF_01595">
    <property type="entry name" value="PNPase"/>
    <property type="match status" value="1"/>
</dbReference>
<dbReference type="InterPro" id="IPR001247">
    <property type="entry name" value="ExoRNase_PH_dom1"/>
</dbReference>
<dbReference type="InterPro" id="IPR015847">
    <property type="entry name" value="ExoRNase_PH_dom2"/>
</dbReference>
<dbReference type="InterPro" id="IPR036345">
    <property type="entry name" value="ExoRNase_PH_dom2_sf"/>
</dbReference>
<dbReference type="InterPro" id="IPR004087">
    <property type="entry name" value="KH_dom"/>
</dbReference>
<dbReference type="InterPro" id="IPR004088">
    <property type="entry name" value="KH_dom_type_1"/>
</dbReference>
<dbReference type="InterPro" id="IPR036612">
    <property type="entry name" value="KH_dom_type_1_sf"/>
</dbReference>
<dbReference type="InterPro" id="IPR012340">
    <property type="entry name" value="NA-bd_OB-fold"/>
</dbReference>
<dbReference type="InterPro" id="IPR012162">
    <property type="entry name" value="PNPase"/>
</dbReference>
<dbReference type="InterPro" id="IPR027408">
    <property type="entry name" value="PNPase/RNase_PH_dom_sf"/>
</dbReference>
<dbReference type="InterPro" id="IPR015848">
    <property type="entry name" value="PNPase_PH_RNA-bd_bac/org-type"/>
</dbReference>
<dbReference type="InterPro" id="IPR020568">
    <property type="entry name" value="Ribosomal_Su5_D2-typ_SF"/>
</dbReference>
<dbReference type="InterPro" id="IPR003029">
    <property type="entry name" value="S1_domain"/>
</dbReference>
<dbReference type="NCBIfam" id="TIGR03591">
    <property type="entry name" value="polynuc_phos"/>
    <property type="match status" value="1"/>
</dbReference>
<dbReference type="NCBIfam" id="NF008805">
    <property type="entry name" value="PRK11824.1"/>
    <property type="match status" value="1"/>
</dbReference>
<dbReference type="PANTHER" id="PTHR11252">
    <property type="entry name" value="POLYRIBONUCLEOTIDE NUCLEOTIDYLTRANSFERASE"/>
    <property type="match status" value="1"/>
</dbReference>
<dbReference type="PANTHER" id="PTHR11252:SF0">
    <property type="entry name" value="POLYRIBONUCLEOTIDE NUCLEOTIDYLTRANSFERASE 1, MITOCHONDRIAL"/>
    <property type="match status" value="1"/>
</dbReference>
<dbReference type="Pfam" id="PF00013">
    <property type="entry name" value="KH_1"/>
    <property type="match status" value="1"/>
</dbReference>
<dbReference type="Pfam" id="PF03726">
    <property type="entry name" value="PNPase"/>
    <property type="match status" value="1"/>
</dbReference>
<dbReference type="Pfam" id="PF01138">
    <property type="entry name" value="RNase_PH"/>
    <property type="match status" value="2"/>
</dbReference>
<dbReference type="Pfam" id="PF03725">
    <property type="entry name" value="RNase_PH_C"/>
    <property type="match status" value="2"/>
</dbReference>
<dbReference type="Pfam" id="PF00575">
    <property type="entry name" value="S1"/>
    <property type="match status" value="1"/>
</dbReference>
<dbReference type="PIRSF" id="PIRSF005499">
    <property type="entry name" value="PNPase"/>
    <property type="match status" value="1"/>
</dbReference>
<dbReference type="SMART" id="SM00322">
    <property type="entry name" value="KH"/>
    <property type="match status" value="1"/>
</dbReference>
<dbReference type="SMART" id="SM00316">
    <property type="entry name" value="S1"/>
    <property type="match status" value="1"/>
</dbReference>
<dbReference type="SUPFAM" id="SSF54791">
    <property type="entry name" value="Eukaryotic type KH-domain (KH-domain type I)"/>
    <property type="match status" value="1"/>
</dbReference>
<dbReference type="SUPFAM" id="SSF50249">
    <property type="entry name" value="Nucleic acid-binding proteins"/>
    <property type="match status" value="1"/>
</dbReference>
<dbReference type="SUPFAM" id="SSF55666">
    <property type="entry name" value="Ribonuclease PH domain 2-like"/>
    <property type="match status" value="2"/>
</dbReference>
<dbReference type="SUPFAM" id="SSF54211">
    <property type="entry name" value="Ribosomal protein S5 domain 2-like"/>
    <property type="match status" value="2"/>
</dbReference>
<dbReference type="PROSITE" id="PS50084">
    <property type="entry name" value="KH_TYPE_1"/>
    <property type="match status" value="1"/>
</dbReference>
<dbReference type="PROSITE" id="PS50126">
    <property type="entry name" value="S1"/>
    <property type="match status" value="1"/>
</dbReference>